<feature type="chain" id="PRO_1000011926" description="Diaminopimelate epimerase">
    <location>
        <begin position="1"/>
        <end position="284"/>
    </location>
</feature>
<feature type="active site" description="Proton donor" evidence="1">
    <location>
        <position position="79"/>
    </location>
</feature>
<feature type="active site" description="Proton acceptor" evidence="1">
    <location>
        <position position="227"/>
    </location>
</feature>
<feature type="binding site" evidence="1">
    <location>
        <position position="13"/>
    </location>
    <ligand>
        <name>substrate</name>
    </ligand>
</feature>
<feature type="binding site" evidence="1">
    <location>
        <position position="70"/>
    </location>
    <ligand>
        <name>substrate</name>
    </ligand>
</feature>
<feature type="binding site" evidence="1">
    <location>
        <begin position="80"/>
        <end position="81"/>
    </location>
    <ligand>
        <name>substrate</name>
    </ligand>
</feature>
<feature type="binding site" evidence="1">
    <location>
        <position position="167"/>
    </location>
    <ligand>
        <name>substrate</name>
    </ligand>
</feature>
<feature type="binding site" evidence="1">
    <location>
        <position position="200"/>
    </location>
    <ligand>
        <name>substrate</name>
    </ligand>
</feature>
<feature type="binding site" evidence="1">
    <location>
        <begin position="218"/>
        <end position="219"/>
    </location>
    <ligand>
        <name>substrate</name>
    </ligand>
</feature>
<feature type="binding site" evidence="1">
    <location>
        <begin position="228"/>
        <end position="229"/>
    </location>
    <ligand>
        <name>substrate</name>
    </ligand>
</feature>
<feature type="site" description="Could be important to modulate the pK values of the two catalytic cysteine residues" evidence="1">
    <location>
        <position position="169"/>
    </location>
</feature>
<feature type="site" description="Could be important to modulate the pK values of the two catalytic cysteine residues" evidence="1">
    <location>
        <position position="218"/>
    </location>
</feature>
<sequence>MKNNFSKYQGLGNDFIIFDARSNNLDHLFSKNKDNFIEHLCNRNFGIGADGIILILESNNKCFVRMKIYNSDGSEPEMCGNGIRCLIAFLNDNNEINELSEIPIETKAGLILTSIDCNENIKVNMGEPILSPLDIPTKLLMNSLKVPNGVITLKDQILNVYAASMGNPHMIVFVNDIEGIPFQEWGSFLEKHNTFPNDTNVHFVEIIDKSNIKVKVWERGCGPTLACGTGACACLVVTSKLGKTLNNANVYLPGGKLEVEWPNQSGPVFMQGPALKVFSGEIDI</sequence>
<name>DAPF_PROM1</name>
<accession>A2C243</accession>
<gene>
    <name evidence="1" type="primary">dapF</name>
    <name type="ordered locus">NATL1_09951</name>
</gene>
<reference key="1">
    <citation type="journal article" date="2007" name="PLoS Genet.">
        <title>Patterns and implications of gene gain and loss in the evolution of Prochlorococcus.</title>
        <authorList>
            <person name="Kettler G.C."/>
            <person name="Martiny A.C."/>
            <person name="Huang K."/>
            <person name="Zucker J."/>
            <person name="Coleman M.L."/>
            <person name="Rodrigue S."/>
            <person name="Chen F."/>
            <person name="Lapidus A."/>
            <person name="Ferriera S."/>
            <person name="Johnson J."/>
            <person name="Steglich C."/>
            <person name="Church G.M."/>
            <person name="Richardson P."/>
            <person name="Chisholm S.W."/>
        </authorList>
    </citation>
    <scope>NUCLEOTIDE SEQUENCE [LARGE SCALE GENOMIC DNA]</scope>
    <source>
        <strain>NATL1A</strain>
    </source>
</reference>
<evidence type="ECO:0000255" key="1">
    <source>
        <dbReference type="HAMAP-Rule" id="MF_00197"/>
    </source>
</evidence>
<keyword id="KW-0028">Amino-acid biosynthesis</keyword>
<keyword id="KW-0963">Cytoplasm</keyword>
<keyword id="KW-0413">Isomerase</keyword>
<keyword id="KW-0457">Lysine biosynthesis</keyword>
<protein>
    <recommendedName>
        <fullName evidence="1">Diaminopimelate epimerase</fullName>
        <shortName evidence="1">DAP epimerase</shortName>
        <ecNumber evidence="1">5.1.1.7</ecNumber>
    </recommendedName>
    <alternativeName>
        <fullName evidence="1">PLP-independent amino acid racemase</fullName>
    </alternativeName>
</protein>
<organism>
    <name type="scientific">Prochlorococcus marinus (strain NATL1A)</name>
    <dbReference type="NCBI Taxonomy" id="167555"/>
    <lineage>
        <taxon>Bacteria</taxon>
        <taxon>Bacillati</taxon>
        <taxon>Cyanobacteriota</taxon>
        <taxon>Cyanophyceae</taxon>
        <taxon>Synechococcales</taxon>
        <taxon>Prochlorococcaceae</taxon>
        <taxon>Prochlorococcus</taxon>
    </lineage>
</organism>
<dbReference type="EC" id="5.1.1.7" evidence="1"/>
<dbReference type="EMBL" id="CP000553">
    <property type="protein sequence ID" value="ABM75553.1"/>
    <property type="molecule type" value="Genomic_DNA"/>
</dbReference>
<dbReference type="RefSeq" id="WP_011823679.1">
    <property type="nucleotide sequence ID" value="NC_008819.1"/>
</dbReference>
<dbReference type="SMR" id="A2C243"/>
<dbReference type="KEGG" id="pme:NATL1_09951"/>
<dbReference type="eggNOG" id="COG0253">
    <property type="taxonomic scope" value="Bacteria"/>
</dbReference>
<dbReference type="HOGENOM" id="CLU_053306_3_0_3"/>
<dbReference type="UniPathway" id="UPA00034">
    <property type="reaction ID" value="UER00025"/>
</dbReference>
<dbReference type="Proteomes" id="UP000002592">
    <property type="component" value="Chromosome"/>
</dbReference>
<dbReference type="GO" id="GO:0005829">
    <property type="term" value="C:cytosol"/>
    <property type="evidence" value="ECO:0007669"/>
    <property type="project" value="TreeGrafter"/>
</dbReference>
<dbReference type="GO" id="GO:0008837">
    <property type="term" value="F:diaminopimelate epimerase activity"/>
    <property type="evidence" value="ECO:0007669"/>
    <property type="project" value="UniProtKB-UniRule"/>
</dbReference>
<dbReference type="GO" id="GO:0009089">
    <property type="term" value="P:lysine biosynthetic process via diaminopimelate"/>
    <property type="evidence" value="ECO:0007669"/>
    <property type="project" value="UniProtKB-UniRule"/>
</dbReference>
<dbReference type="Gene3D" id="3.10.310.10">
    <property type="entry name" value="Diaminopimelate Epimerase, Chain A, domain 1"/>
    <property type="match status" value="2"/>
</dbReference>
<dbReference type="HAMAP" id="MF_00197">
    <property type="entry name" value="DAP_epimerase"/>
    <property type="match status" value="1"/>
</dbReference>
<dbReference type="InterPro" id="IPR018510">
    <property type="entry name" value="DAP_epimerase_AS"/>
</dbReference>
<dbReference type="InterPro" id="IPR001653">
    <property type="entry name" value="DAP_epimerase_DapF"/>
</dbReference>
<dbReference type="NCBIfam" id="TIGR00652">
    <property type="entry name" value="DapF"/>
    <property type="match status" value="1"/>
</dbReference>
<dbReference type="PANTHER" id="PTHR31689:SF0">
    <property type="entry name" value="DIAMINOPIMELATE EPIMERASE"/>
    <property type="match status" value="1"/>
</dbReference>
<dbReference type="PANTHER" id="PTHR31689">
    <property type="entry name" value="DIAMINOPIMELATE EPIMERASE, CHLOROPLASTIC"/>
    <property type="match status" value="1"/>
</dbReference>
<dbReference type="Pfam" id="PF01678">
    <property type="entry name" value="DAP_epimerase"/>
    <property type="match status" value="2"/>
</dbReference>
<dbReference type="SUPFAM" id="SSF54506">
    <property type="entry name" value="Diaminopimelate epimerase-like"/>
    <property type="match status" value="2"/>
</dbReference>
<dbReference type="PROSITE" id="PS01326">
    <property type="entry name" value="DAP_EPIMERASE"/>
    <property type="match status" value="1"/>
</dbReference>
<proteinExistence type="inferred from homology"/>
<comment type="function">
    <text evidence="1">Catalyzes the stereoinversion of LL-2,6-diaminopimelate (L,L-DAP) to meso-diaminopimelate (meso-DAP), a precursor of L-lysine and an essential component of the bacterial peptidoglycan.</text>
</comment>
<comment type="catalytic activity">
    <reaction evidence="1">
        <text>(2S,6S)-2,6-diaminopimelate = meso-2,6-diaminopimelate</text>
        <dbReference type="Rhea" id="RHEA:15393"/>
        <dbReference type="ChEBI" id="CHEBI:57609"/>
        <dbReference type="ChEBI" id="CHEBI:57791"/>
        <dbReference type="EC" id="5.1.1.7"/>
    </reaction>
</comment>
<comment type="pathway">
    <text evidence="1">Amino-acid biosynthesis; L-lysine biosynthesis via DAP pathway; DL-2,6-diaminopimelate from LL-2,6-diaminopimelate: step 1/1.</text>
</comment>
<comment type="subunit">
    <text evidence="1">Homodimer.</text>
</comment>
<comment type="subcellular location">
    <subcellularLocation>
        <location evidence="1">Cytoplasm</location>
    </subcellularLocation>
</comment>
<comment type="similarity">
    <text evidence="1">Belongs to the diaminopimelate epimerase family.</text>
</comment>